<organism>
    <name type="scientific">Serratia proteamaculans (strain 568)</name>
    <dbReference type="NCBI Taxonomy" id="399741"/>
    <lineage>
        <taxon>Bacteria</taxon>
        <taxon>Pseudomonadati</taxon>
        <taxon>Pseudomonadota</taxon>
        <taxon>Gammaproteobacteria</taxon>
        <taxon>Enterobacterales</taxon>
        <taxon>Yersiniaceae</taxon>
        <taxon>Serratia</taxon>
    </lineage>
</organism>
<reference key="1">
    <citation type="submission" date="2007-09" db="EMBL/GenBank/DDBJ databases">
        <title>Complete sequence of chromosome of Serratia proteamaculans 568.</title>
        <authorList>
            <consortium name="US DOE Joint Genome Institute"/>
            <person name="Copeland A."/>
            <person name="Lucas S."/>
            <person name="Lapidus A."/>
            <person name="Barry K."/>
            <person name="Glavina del Rio T."/>
            <person name="Dalin E."/>
            <person name="Tice H."/>
            <person name="Pitluck S."/>
            <person name="Chain P."/>
            <person name="Malfatti S."/>
            <person name="Shin M."/>
            <person name="Vergez L."/>
            <person name="Schmutz J."/>
            <person name="Larimer F."/>
            <person name="Land M."/>
            <person name="Hauser L."/>
            <person name="Kyrpides N."/>
            <person name="Kim E."/>
            <person name="Taghavi S."/>
            <person name="Newman L."/>
            <person name="Vangronsveld J."/>
            <person name="van der Lelie D."/>
            <person name="Richardson P."/>
        </authorList>
    </citation>
    <scope>NUCLEOTIDE SEQUENCE [LARGE SCALE GENOMIC DNA]</scope>
    <source>
        <strain>568</strain>
    </source>
</reference>
<comment type="function">
    <text evidence="1">Murein-degrading enzyme that degrades murein glycan strands and insoluble, high-molecular weight murein sacculi, with the concomitant formation of a 1,6-anhydromuramoyl product. Lytic transglycosylases (LTs) play an integral role in the metabolism of the peptidoglycan (PG) sacculus. Their lytic action creates space within the PG sacculus to allow for its expansion as well as for the insertion of various structures such as secretion systems and flagella.</text>
</comment>
<comment type="catalytic activity">
    <reaction evidence="1">
        <text>Exolytic cleavage of the (1-&gt;4)-beta-glycosidic linkage between N-acetylmuramic acid (MurNAc) and N-acetylglucosamine (GlcNAc) residues in peptidoglycan, from either the reducing or the non-reducing ends of the peptidoglycan chains, with concomitant formation of a 1,6-anhydrobond in the MurNAc residue.</text>
        <dbReference type="EC" id="4.2.2.n1"/>
    </reaction>
</comment>
<comment type="subcellular location">
    <subcellularLocation>
        <location>Cell outer membrane</location>
        <topology>Peripheral membrane protein</topology>
    </subcellularLocation>
    <text evidence="1">Attached to the inner leaflet of the outer membrane.</text>
</comment>
<comment type="domain">
    <text evidence="1">The N-terminal domain does not have lytic activity and probably modulates enzymatic activity. The C-terminal domain is the catalytic active domain.</text>
</comment>
<comment type="similarity">
    <text evidence="1">In the N-terminal section; belongs to the bacterial solute-binding protein 3 family.</text>
</comment>
<comment type="similarity">
    <text evidence="1">In the C-terminal section; belongs to the transglycosylase Slt family.</text>
</comment>
<comment type="sequence caution" evidence="2">
    <conflict type="erroneous initiation">
        <sequence resource="EMBL-CDS" id="ABV42751"/>
    </conflict>
</comment>
<evidence type="ECO:0000255" key="1">
    <source>
        <dbReference type="HAMAP-Rule" id="MF_02016"/>
    </source>
</evidence>
<evidence type="ECO:0000305" key="2"/>
<sequence>MKRLKINYILIGVVTLLLALALWPNITWRGGQGGQLEEIKSRGELRISTLNSPLTYFTTKQGPSGLDYELAKRFANYLGVKLVVIPHKNINDLFDDLDDDDADLLAAGLIYNQDRLSRARTGPAYYSVSQQLVYRLGTARPKTFADIKGKLAVASGSAHVSTLKQLKQSKFPDLSWEASSDLTSKELLEQVADGKLDYTLGDSVTIALLQRIHPQLAVAFDVTDEEPVTWYLKRGTDDSLYAAMLDFYSQMVDDGTLARLEEKYLGHVGSFDYVDTKTFLSAIDSVLPTFRSLFEKYASEIDWKLLAAIAYQESHWNPQATSPTGVRGLMMLTRATADGLGVNDRLDPEESIQGGALYLQRLMAKVPDSVPEDERIWFSLAAYNMGWGHMLDARKLTKMQKGNPDSWVDVKQRLPMLSQKRYYPQLTYGYARGREAYNYVENIRRYQVSLVGYLQEKERKAAQEAAEQADQGKGYPAVTPELALNF</sequence>
<feature type="signal peptide" evidence="1">
    <location>
        <begin position="1"/>
        <end position="21"/>
    </location>
</feature>
<feature type="chain" id="PRO_0000353976" description="Membrane-bound lytic murein transglycosylase F">
    <location>
        <begin position="22"/>
        <end position="486"/>
    </location>
</feature>
<feature type="region of interest" description="Non-LT domain" evidence="1">
    <location>
        <begin position="22"/>
        <end position="268"/>
    </location>
</feature>
<feature type="region of interest" description="LT domain" evidence="1">
    <location>
        <begin position="269"/>
        <end position="486"/>
    </location>
</feature>
<feature type="active site" evidence="1">
    <location>
        <position position="313"/>
    </location>
</feature>
<gene>
    <name evidence="1" type="primary">mltF</name>
    <name type="ordered locus">Spro_3655</name>
</gene>
<keyword id="KW-0998">Cell outer membrane</keyword>
<keyword id="KW-0961">Cell wall biogenesis/degradation</keyword>
<keyword id="KW-0456">Lyase</keyword>
<keyword id="KW-0472">Membrane</keyword>
<keyword id="KW-0732">Signal</keyword>
<name>MLTF_SERP5</name>
<proteinExistence type="inferred from homology"/>
<protein>
    <recommendedName>
        <fullName evidence="1">Membrane-bound lytic murein transglycosylase F</fullName>
        <ecNumber evidence="1">4.2.2.n1</ecNumber>
    </recommendedName>
    <alternativeName>
        <fullName evidence="1">Murein lyase F</fullName>
    </alternativeName>
</protein>
<dbReference type="EC" id="4.2.2.n1" evidence="1"/>
<dbReference type="EMBL" id="CP000826">
    <property type="protein sequence ID" value="ABV42751.1"/>
    <property type="status" value="ALT_INIT"/>
    <property type="molecule type" value="Genomic_DNA"/>
</dbReference>
<dbReference type="SMR" id="A8GI11"/>
<dbReference type="STRING" id="399741.Spro_3655"/>
<dbReference type="CAZy" id="GH23">
    <property type="family name" value="Glycoside Hydrolase Family 23"/>
</dbReference>
<dbReference type="KEGG" id="spe:Spro_3655"/>
<dbReference type="eggNOG" id="COG4623">
    <property type="taxonomic scope" value="Bacteria"/>
</dbReference>
<dbReference type="HOGENOM" id="CLU_027494_0_1_6"/>
<dbReference type="OrthoDB" id="9815002at2"/>
<dbReference type="GO" id="GO:0009279">
    <property type="term" value="C:cell outer membrane"/>
    <property type="evidence" value="ECO:0007669"/>
    <property type="project" value="UniProtKB-SubCell"/>
</dbReference>
<dbReference type="GO" id="GO:0008933">
    <property type="term" value="F:peptidoglycan lytic transglycosylase activity"/>
    <property type="evidence" value="ECO:0007669"/>
    <property type="project" value="UniProtKB-UniRule"/>
</dbReference>
<dbReference type="GO" id="GO:0016998">
    <property type="term" value="P:cell wall macromolecule catabolic process"/>
    <property type="evidence" value="ECO:0007669"/>
    <property type="project" value="UniProtKB-UniRule"/>
</dbReference>
<dbReference type="GO" id="GO:0071555">
    <property type="term" value="P:cell wall organization"/>
    <property type="evidence" value="ECO:0007669"/>
    <property type="project" value="UniProtKB-KW"/>
</dbReference>
<dbReference type="GO" id="GO:0009253">
    <property type="term" value="P:peptidoglycan catabolic process"/>
    <property type="evidence" value="ECO:0007669"/>
    <property type="project" value="TreeGrafter"/>
</dbReference>
<dbReference type="CDD" id="cd13403">
    <property type="entry name" value="MLTF-like"/>
    <property type="match status" value="1"/>
</dbReference>
<dbReference type="CDD" id="cd01009">
    <property type="entry name" value="PBP2_YfhD_N"/>
    <property type="match status" value="1"/>
</dbReference>
<dbReference type="FunFam" id="1.10.530.10:FF:000003">
    <property type="entry name" value="Membrane-bound lytic murein transglycosylase F"/>
    <property type="match status" value="1"/>
</dbReference>
<dbReference type="Gene3D" id="1.10.530.10">
    <property type="match status" value="1"/>
</dbReference>
<dbReference type="Gene3D" id="3.40.190.10">
    <property type="entry name" value="Periplasmic binding protein-like II"/>
    <property type="match status" value="2"/>
</dbReference>
<dbReference type="HAMAP" id="MF_02016">
    <property type="entry name" value="MltF"/>
    <property type="match status" value="1"/>
</dbReference>
<dbReference type="InterPro" id="IPR023346">
    <property type="entry name" value="Lysozyme-like_dom_sf"/>
</dbReference>
<dbReference type="InterPro" id="IPR023703">
    <property type="entry name" value="MltF"/>
</dbReference>
<dbReference type="InterPro" id="IPR001638">
    <property type="entry name" value="Solute-binding_3/MltF_N"/>
</dbReference>
<dbReference type="InterPro" id="IPR000189">
    <property type="entry name" value="Transglyc_AS"/>
</dbReference>
<dbReference type="InterPro" id="IPR008258">
    <property type="entry name" value="Transglycosylase_SLT_dom_1"/>
</dbReference>
<dbReference type="NCBIfam" id="NF008112">
    <property type="entry name" value="PRK10859.1"/>
    <property type="match status" value="1"/>
</dbReference>
<dbReference type="PANTHER" id="PTHR35936">
    <property type="entry name" value="MEMBRANE-BOUND LYTIC MUREIN TRANSGLYCOSYLASE F"/>
    <property type="match status" value="1"/>
</dbReference>
<dbReference type="PANTHER" id="PTHR35936:SF32">
    <property type="entry name" value="MEMBRANE-BOUND LYTIC MUREIN TRANSGLYCOSYLASE F"/>
    <property type="match status" value="1"/>
</dbReference>
<dbReference type="Pfam" id="PF00497">
    <property type="entry name" value="SBP_bac_3"/>
    <property type="match status" value="1"/>
</dbReference>
<dbReference type="Pfam" id="PF01464">
    <property type="entry name" value="SLT"/>
    <property type="match status" value="1"/>
</dbReference>
<dbReference type="SMART" id="SM00062">
    <property type="entry name" value="PBPb"/>
    <property type="match status" value="1"/>
</dbReference>
<dbReference type="SUPFAM" id="SSF53955">
    <property type="entry name" value="Lysozyme-like"/>
    <property type="match status" value="1"/>
</dbReference>
<dbReference type="SUPFAM" id="SSF53850">
    <property type="entry name" value="Periplasmic binding protein-like II"/>
    <property type="match status" value="1"/>
</dbReference>
<dbReference type="PROSITE" id="PS00922">
    <property type="entry name" value="TRANSGLYCOSYLASE"/>
    <property type="match status" value="1"/>
</dbReference>
<accession>A8GI11</accession>